<proteinExistence type="inferred from homology"/>
<feature type="chain" id="PRO_1000096584" description="Uracil-DNA glycosylase">
    <location>
        <begin position="1"/>
        <end position="233"/>
    </location>
</feature>
<feature type="active site" description="Proton acceptor" evidence="1">
    <location>
        <position position="70"/>
    </location>
</feature>
<dbReference type="EC" id="3.2.2.27" evidence="1"/>
<dbReference type="EMBL" id="CP001217">
    <property type="protein sequence ID" value="ACJ08462.1"/>
    <property type="molecule type" value="Genomic_DNA"/>
</dbReference>
<dbReference type="SMR" id="B6JNI4"/>
<dbReference type="KEGG" id="hpp:HPP12_1310"/>
<dbReference type="HOGENOM" id="CLU_032162_3_2_7"/>
<dbReference type="Proteomes" id="UP000008198">
    <property type="component" value="Chromosome"/>
</dbReference>
<dbReference type="GO" id="GO:0005737">
    <property type="term" value="C:cytoplasm"/>
    <property type="evidence" value="ECO:0007669"/>
    <property type="project" value="UniProtKB-SubCell"/>
</dbReference>
<dbReference type="GO" id="GO:0004844">
    <property type="term" value="F:uracil DNA N-glycosylase activity"/>
    <property type="evidence" value="ECO:0007669"/>
    <property type="project" value="UniProtKB-UniRule"/>
</dbReference>
<dbReference type="GO" id="GO:0097510">
    <property type="term" value="P:base-excision repair, AP site formation via deaminated base removal"/>
    <property type="evidence" value="ECO:0007669"/>
    <property type="project" value="TreeGrafter"/>
</dbReference>
<dbReference type="CDD" id="cd10027">
    <property type="entry name" value="UDG-F1-like"/>
    <property type="match status" value="1"/>
</dbReference>
<dbReference type="Gene3D" id="3.40.470.10">
    <property type="entry name" value="Uracil-DNA glycosylase-like domain"/>
    <property type="match status" value="1"/>
</dbReference>
<dbReference type="HAMAP" id="MF_00148">
    <property type="entry name" value="UDG"/>
    <property type="match status" value="1"/>
</dbReference>
<dbReference type="InterPro" id="IPR002043">
    <property type="entry name" value="UDG_fam1"/>
</dbReference>
<dbReference type="InterPro" id="IPR018085">
    <property type="entry name" value="Ura-DNA_Glyclase_AS"/>
</dbReference>
<dbReference type="InterPro" id="IPR005122">
    <property type="entry name" value="Uracil-DNA_glycosylase-like"/>
</dbReference>
<dbReference type="InterPro" id="IPR036895">
    <property type="entry name" value="Uracil-DNA_glycosylase-like_sf"/>
</dbReference>
<dbReference type="NCBIfam" id="NF003588">
    <property type="entry name" value="PRK05254.1-1"/>
    <property type="match status" value="1"/>
</dbReference>
<dbReference type="NCBIfam" id="NF003589">
    <property type="entry name" value="PRK05254.1-2"/>
    <property type="match status" value="1"/>
</dbReference>
<dbReference type="NCBIfam" id="NF003592">
    <property type="entry name" value="PRK05254.1-5"/>
    <property type="match status" value="1"/>
</dbReference>
<dbReference type="NCBIfam" id="TIGR00628">
    <property type="entry name" value="ung"/>
    <property type="match status" value="1"/>
</dbReference>
<dbReference type="PANTHER" id="PTHR11264">
    <property type="entry name" value="URACIL-DNA GLYCOSYLASE"/>
    <property type="match status" value="1"/>
</dbReference>
<dbReference type="PANTHER" id="PTHR11264:SF0">
    <property type="entry name" value="URACIL-DNA GLYCOSYLASE"/>
    <property type="match status" value="1"/>
</dbReference>
<dbReference type="Pfam" id="PF03167">
    <property type="entry name" value="UDG"/>
    <property type="match status" value="1"/>
</dbReference>
<dbReference type="SMART" id="SM00986">
    <property type="entry name" value="UDG"/>
    <property type="match status" value="1"/>
</dbReference>
<dbReference type="SMART" id="SM00987">
    <property type="entry name" value="UreE_C"/>
    <property type="match status" value="1"/>
</dbReference>
<dbReference type="SUPFAM" id="SSF52141">
    <property type="entry name" value="Uracil-DNA glycosylase-like"/>
    <property type="match status" value="1"/>
</dbReference>
<dbReference type="PROSITE" id="PS00130">
    <property type="entry name" value="U_DNA_GLYCOSYLASE"/>
    <property type="match status" value="1"/>
</dbReference>
<keyword id="KW-0963">Cytoplasm</keyword>
<keyword id="KW-0227">DNA damage</keyword>
<keyword id="KW-0234">DNA repair</keyword>
<keyword id="KW-0378">Hydrolase</keyword>
<evidence type="ECO:0000255" key="1">
    <source>
        <dbReference type="HAMAP-Rule" id="MF_00148"/>
    </source>
</evidence>
<comment type="function">
    <text evidence="1">Excises uracil residues from the DNA which can arise as a result of misincorporation of dUMP residues by DNA polymerase or due to deamination of cytosine.</text>
</comment>
<comment type="catalytic activity">
    <reaction evidence="1">
        <text>Hydrolyzes single-stranded DNA or mismatched double-stranded DNA and polynucleotides, releasing free uracil.</text>
        <dbReference type="EC" id="3.2.2.27"/>
    </reaction>
</comment>
<comment type="subcellular location">
    <subcellularLocation>
        <location evidence="1">Cytoplasm</location>
    </subcellularLocation>
</comment>
<comment type="similarity">
    <text evidence="1">Belongs to the uracil-DNA glycosylase (UDG) superfamily. UNG family.</text>
</comment>
<name>UNG_HELP2</name>
<organism>
    <name type="scientific">Helicobacter pylori (strain P12)</name>
    <dbReference type="NCBI Taxonomy" id="570508"/>
    <lineage>
        <taxon>Bacteria</taxon>
        <taxon>Pseudomonadati</taxon>
        <taxon>Campylobacterota</taxon>
        <taxon>Epsilonproteobacteria</taxon>
        <taxon>Campylobacterales</taxon>
        <taxon>Helicobacteraceae</taxon>
        <taxon>Helicobacter</taxon>
    </lineage>
</organism>
<accession>B6JNI4</accession>
<protein>
    <recommendedName>
        <fullName evidence="1">Uracil-DNA glycosylase</fullName>
        <shortName evidence="1">UDG</shortName>
        <ecNumber evidence="1">3.2.2.27</ecNumber>
    </recommendedName>
</protein>
<reference key="1">
    <citation type="submission" date="2008-10" db="EMBL/GenBank/DDBJ databases">
        <title>The complete genome sequence of Helicobacter pylori strain P12.</title>
        <authorList>
            <person name="Fischer W."/>
            <person name="Windhager L."/>
            <person name="Karnholz A."/>
            <person name="Zeiller M."/>
            <person name="Zimmer R."/>
            <person name="Haas R."/>
        </authorList>
    </citation>
    <scope>NUCLEOTIDE SEQUENCE [LARGE SCALE GENOMIC DNA]</scope>
    <source>
        <strain>P12</strain>
    </source>
</reference>
<gene>
    <name evidence="1" type="primary">ung</name>
    <name type="ordered locus">HPP12_1310</name>
</gene>
<sequence>MKLFDHAPLSLAWREFLQSEFKKPYFLEIEKRYLEALKSPKTIFPKSSNLFHALNLTPPSAVKIILLGQDPYHSTYLKKEQELPVAMGLSFSVEKNAPIPPSLKNIFKELHANLGVPVSCCGDLSAWAKRGMLLLNAILSVEKNQAASHKYIGWEAFSDQILMRLFKTTAPLIVVLLGKVAQKKIVLIPKNKHIIITAPHPSPLSRGFLGSGVFTSVQKAYREVYRKDFDFSL</sequence>